<comment type="subcellular location">
    <subcellularLocation>
        <location evidence="2">Cell outer membrane</location>
    </subcellularLocation>
</comment>
<reference key="1">
    <citation type="submission" date="2007-07" db="EMBL/GenBank/DDBJ databases">
        <title>Complete sequence of chromosome of Shewanella baltica OS185.</title>
        <authorList>
            <consortium name="US DOE Joint Genome Institute"/>
            <person name="Copeland A."/>
            <person name="Lucas S."/>
            <person name="Lapidus A."/>
            <person name="Barry K."/>
            <person name="Glavina del Rio T."/>
            <person name="Dalin E."/>
            <person name="Tice H."/>
            <person name="Pitluck S."/>
            <person name="Sims D."/>
            <person name="Brettin T."/>
            <person name="Bruce D."/>
            <person name="Detter J.C."/>
            <person name="Han C."/>
            <person name="Schmutz J."/>
            <person name="Larimer F."/>
            <person name="Land M."/>
            <person name="Hauser L."/>
            <person name="Kyrpides N."/>
            <person name="Mikhailova N."/>
            <person name="Brettar I."/>
            <person name="Rodrigues J."/>
            <person name="Konstantinidis K."/>
            <person name="Tiedje J."/>
            <person name="Richardson P."/>
        </authorList>
    </citation>
    <scope>NUCLEOTIDE SEQUENCE [LARGE SCALE GENOMIC DNA]</scope>
    <source>
        <strain>OS185</strain>
    </source>
</reference>
<evidence type="ECO:0000255" key="1"/>
<evidence type="ECO:0000305" key="2"/>
<evidence type="ECO:0007829" key="3">
    <source>
        <dbReference type="PDB" id="6R2Q"/>
    </source>
</evidence>
<proteinExistence type="evidence at protein level"/>
<accession>P0DSN2</accession>
<organism>
    <name type="scientific">Shewanella baltica (strain OS185)</name>
    <dbReference type="NCBI Taxonomy" id="402882"/>
    <lineage>
        <taxon>Bacteria</taxon>
        <taxon>Pseudomonadati</taxon>
        <taxon>Pseudomonadota</taxon>
        <taxon>Gammaproteobacteria</taxon>
        <taxon>Alteromonadales</taxon>
        <taxon>Shewanellaceae</taxon>
        <taxon>Shewanella</taxon>
    </lineage>
</organism>
<gene>
    <name type="primary">mtrB</name>
    <name type="ordered locus">Shew185_1576</name>
</gene>
<feature type="signal peptide" evidence="1">
    <location>
        <begin position="1"/>
        <end position="21"/>
    </location>
</feature>
<feature type="chain" id="PRO_0000447314" description="Outer membrane protein MtrB">
    <location>
        <begin position="22"/>
        <end position="695"/>
    </location>
</feature>
<feature type="strand" evidence="3">
    <location>
        <begin position="49"/>
        <end position="63"/>
    </location>
</feature>
<feature type="helix" evidence="3">
    <location>
        <begin position="69"/>
        <end position="72"/>
    </location>
</feature>
<feature type="strand" evidence="3">
    <location>
        <begin position="73"/>
        <end position="79"/>
    </location>
</feature>
<feature type="strand" evidence="3">
    <location>
        <begin position="82"/>
        <end position="88"/>
    </location>
</feature>
<feature type="strand" evidence="3">
    <location>
        <begin position="92"/>
        <end position="96"/>
    </location>
</feature>
<feature type="strand" evidence="3">
    <location>
        <begin position="99"/>
        <end position="104"/>
    </location>
</feature>
<feature type="strand" evidence="3">
    <location>
        <begin position="110"/>
        <end position="117"/>
    </location>
</feature>
<feature type="turn" evidence="3">
    <location>
        <begin position="118"/>
        <end position="120"/>
    </location>
</feature>
<feature type="strand" evidence="3">
    <location>
        <begin position="121"/>
        <end position="141"/>
    </location>
</feature>
<feature type="strand" evidence="3">
    <location>
        <begin position="147"/>
        <end position="151"/>
    </location>
</feature>
<feature type="strand" evidence="3">
    <location>
        <begin position="159"/>
        <end position="161"/>
    </location>
</feature>
<feature type="helix" evidence="3">
    <location>
        <begin position="162"/>
        <end position="164"/>
    </location>
</feature>
<feature type="helix" evidence="3">
    <location>
        <begin position="168"/>
        <end position="171"/>
    </location>
</feature>
<feature type="strand" evidence="3">
    <location>
        <begin position="173"/>
        <end position="191"/>
    </location>
</feature>
<feature type="strand" evidence="3">
    <location>
        <begin position="193"/>
        <end position="219"/>
    </location>
</feature>
<feature type="strand" evidence="3">
    <location>
        <begin position="221"/>
        <end position="242"/>
    </location>
</feature>
<feature type="strand" evidence="3">
    <location>
        <begin position="244"/>
        <end position="260"/>
    </location>
</feature>
<feature type="strand" evidence="3">
    <location>
        <begin position="263"/>
        <end position="267"/>
    </location>
</feature>
<feature type="strand" evidence="3">
    <location>
        <begin position="278"/>
        <end position="283"/>
    </location>
</feature>
<feature type="strand" evidence="3">
    <location>
        <begin position="288"/>
        <end position="299"/>
    </location>
</feature>
<feature type="strand" evidence="3">
    <location>
        <begin position="302"/>
        <end position="317"/>
    </location>
</feature>
<feature type="strand" evidence="3">
    <location>
        <begin position="337"/>
        <end position="369"/>
    </location>
</feature>
<feature type="strand" evidence="3">
    <location>
        <begin position="375"/>
        <end position="378"/>
    </location>
</feature>
<feature type="strand" evidence="3">
    <location>
        <begin position="387"/>
        <end position="390"/>
    </location>
</feature>
<feature type="strand" evidence="3">
    <location>
        <begin position="396"/>
        <end position="410"/>
    </location>
</feature>
<feature type="strand" evidence="3">
    <location>
        <begin position="413"/>
        <end position="430"/>
    </location>
</feature>
<feature type="strand" evidence="3">
    <location>
        <begin position="432"/>
        <end position="445"/>
    </location>
</feature>
<feature type="strand" evidence="3">
    <location>
        <begin position="452"/>
        <end position="465"/>
    </location>
</feature>
<feature type="strand" evidence="3">
    <location>
        <begin position="471"/>
        <end position="475"/>
    </location>
</feature>
<feature type="turn" evidence="3">
    <location>
        <begin position="484"/>
        <end position="486"/>
    </location>
</feature>
<feature type="strand" evidence="3">
    <location>
        <begin position="489"/>
        <end position="500"/>
    </location>
</feature>
<feature type="strand" evidence="3">
    <location>
        <begin position="506"/>
        <end position="518"/>
    </location>
</feature>
<feature type="strand" evidence="3">
    <location>
        <begin position="523"/>
        <end position="540"/>
    </location>
</feature>
<feature type="strand" evidence="3">
    <location>
        <begin position="542"/>
        <end position="563"/>
    </location>
</feature>
<feature type="strand" evidence="3">
    <location>
        <begin position="567"/>
        <end position="569"/>
    </location>
</feature>
<feature type="strand" evidence="3">
    <location>
        <begin position="572"/>
        <end position="590"/>
    </location>
</feature>
<feature type="strand" evidence="3">
    <location>
        <begin position="593"/>
        <end position="595"/>
    </location>
</feature>
<feature type="strand" evidence="3">
    <location>
        <begin position="598"/>
        <end position="621"/>
    </location>
</feature>
<feature type="strand" evidence="3">
    <location>
        <begin position="625"/>
        <end position="638"/>
    </location>
</feature>
<feature type="strand" evidence="3">
    <location>
        <begin position="642"/>
        <end position="660"/>
    </location>
</feature>
<feature type="helix" evidence="3">
    <location>
        <begin position="666"/>
        <end position="668"/>
    </location>
</feature>
<feature type="strand" evidence="3">
    <location>
        <begin position="680"/>
        <end position="695"/>
    </location>
</feature>
<sequence>MKFKLNLITLALLANTGFAIAADGYGLANANTEKVKMSAWSCKGCVVETGTSGTVGVGVGYNSEEDIRSANAFGTSNEVAGKLDADVTFRGEKGYRASVEAYQLGMDGGRLEVNAGKQGQYNVNVNYRQIATYNSNSALTPYSGVGSDNLTLPDNWVTAGSSSQMPLLMDSLNSLELSLKRERTGLGFDYQGESLWSTHVSYMREEKTGLKKASGGFFNQSMMLAEPVDYTTDSIEAGIKLKGDNWFTALNYNGSIFKNEYNQLNFDSAFNPTFGAQTSGSIALDPDNQSHTVSLMGQYNDSTNVLSARLLTGQMSQDQALVTSGYGYQVPTEALDAKVDLIGLNLKVVSKVTNSLRLSGSYDYNDRDNNTQIEEWTQVSINNVNGKVAYNTPYDNTSQRFKVAADYRITRGMKLDGGYDFRRDERNYQDRETTDENTVWARFRVNSFETWDMWVKGSYGQRDGSEYQASEWTSSETNSLLRKYNLANRDRTQVEARVTHSPIESLTIDFGARYALDDYTDTVIGLTESKDTSYDANISYMITDDLLANAFYNYQIIESEQAGSSNYSTPTWTGFIEDKVDVVGAGISYNNLLENKLRMGLDYTYSDSNSNTQVRQGITGDYGDYFAKVHNINLYAQYQATEKMALRFDYKIENYKDNDAANDIAVNGIWNVVGFGDNSHDYTAQMIMLSMSYKI</sequence>
<dbReference type="EMBL" id="CP000753">
    <property type="protein sequence ID" value="ABS07723.1"/>
    <property type="molecule type" value="Genomic_DNA"/>
</dbReference>
<dbReference type="RefSeq" id="WP_012088804.1">
    <property type="nucleotide sequence ID" value="NC_009665.1"/>
</dbReference>
<dbReference type="PDB" id="6R2Q">
    <property type="method" value="X-ray"/>
    <property type="resolution" value="2.70 A"/>
    <property type="chains" value="B=1-695"/>
</dbReference>
<dbReference type="PDBsum" id="6R2Q"/>
<dbReference type="SMR" id="P0DSN2"/>
<dbReference type="KEGG" id="sbm:Shew185_1576"/>
<dbReference type="GO" id="GO:0009279">
    <property type="term" value="C:cell outer membrane"/>
    <property type="evidence" value="ECO:0007669"/>
    <property type="project" value="UniProtKB-SubCell"/>
</dbReference>
<dbReference type="Gene3D" id="2.40.170.20">
    <property type="entry name" value="TonB-dependent receptor, beta-barrel domain"/>
    <property type="match status" value="1"/>
</dbReference>
<dbReference type="InterPro" id="IPR020016">
    <property type="entry name" value="Decahaem-assoc_OM_MtrB/PioB"/>
</dbReference>
<dbReference type="InterPro" id="IPR036942">
    <property type="entry name" value="TonB_rcpt_b-brl_sf"/>
</dbReference>
<dbReference type="NCBIfam" id="TIGR03509">
    <property type="entry name" value="OMP_MtrB_PioB"/>
    <property type="match status" value="1"/>
</dbReference>
<dbReference type="Pfam" id="PF11854">
    <property type="entry name" value="MtrB_PioB"/>
    <property type="match status" value="1"/>
</dbReference>
<dbReference type="SUPFAM" id="SSF56935">
    <property type="entry name" value="Porins"/>
    <property type="match status" value="2"/>
</dbReference>
<keyword id="KW-0002">3D-structure</keyword>
<keyword id="KW-0998">Cell outer membrane</keyword>
<keyword id="KW-0472">Membrane</keyword>
<keyword id="KW-0732">Signal</keyword>
<name>MTRB_SHEB8</name>
<protein>
    <recommendedName>
        <fullName evidence="2">Outer membrane protein MtrB</fullName>
    </recommendedName>
</protein>